<organism>
    <name type="scientific">Kineococcus radiotolerans (strain ATCC BAA-149 / DSM 14245 / SRS30216)</name>
    <dbReference type="NCBI Taxonomy" id="266940"/>
    <lineage>
        <taxon>Bacteria</taxon>
        <taxon>Bacillati</taxon>
        <taxon>Actinomycetota</taxon>
        <taxon>Actinomycetes</taxon>
        <taxon>Kineosporiales</taxon>
        <taxon>Kineosporiaceae</taxon>
        <taxon>Kineococcus</taxon>
    </lineage>
</organism>
<name>ARLY_KINRD</name>
<dbReference type="EC" id="4.3.2.1" evidence="1"/>
<dbReference type="EMBL" id="CP000750">
    <property type="protein sequence ID" value="ABS04619.1"/>
    <property type="molecule type" value="Genomic_DNA"/>
</dbReference>
<dbReference type="RefSeq" id="WP_012087128.1">
    <property type="nucleotide sequence ID" value="NC_009664.2"/>
</dbReference>
<dbReference type="SMR" id="A6WCT0"/>
<dbReference type="STRING" id="266940.Krad_3155"/>
<dbReference type="KEGG" id="kra:Krad_3155"/>
<dbReference type="eggNOG" id="COG0165">
    <property type="taxonomic scope" value="Bacteria"/>
</dbReference>
<dbReference type="HOGENOM" id="CLU_027272_2_2_11"/>
<dbReference type="OrthoDB" id="9769623at2"/>
<dbReference type="UniPathway" id="UPA00068">
    <property type="reaction ID" value="UER00114"/>
</dbReference>
<dbReference type="Proteomes" id="UP000001116">
    <property type="component" value="Chromosome"/>
</dbReference>
<dbReference type="GO" id="GO:0005829">
    <property type="term" value="C:cytosol"/>
    <property type="evidence" value="ECO:0007669"/>
    <property type="project" value="TreeGrafter"/>
</dbReference>
<dbReference type="GO" id="GO:0004056">
    <property type="term" value="F:argininosuccinate lyase activity"/>
    <property type="evidence" value="ECO:0007669"/>
    <property type="project" value="UniProtKB-UniRule"/>
</dbReference>
<dbReference type="GO" id="GO:0042450">
    <property type="term" value="P:arginine biosynthetic process via ornithine"/>
    <property type="evidence" value="ECO:0007669"/>
    <property type="project" value="InterPro"/>
</dbReference>
<dbReference type="GO" id="GO:0006526">
    <property type="term" value="P:L-arginine biosynthetic process"/>
    <property type="evidence" value="ECO:0007669"/>
    <property type="project" value="UniProtKB-UniRule"/>
</dbReference>
<dbReference type="CDD" id="cd01359">
    <property type="entry name" value="Argininosuccinate_lyase"/>
    <property type="match status" value="1"/>
</dbReference>
<dbReference type="FunFam" id="1.10.40.30:FF:000001">
    <property type="entry name" value="Argininosuccinate lyase"/>
    <property type="match status" value="1"/>
</dbReference>
<dbReference type="FunFam" id="1.20.200.10:FF:000015">
    <property type="entry name" value="argininosuccinate lyase isoform X2"/>
    <property type="match status" value="1"/>
</dbReference>
<dbReference type="Gene3D" id="1.10.40.30">
    <property type="entry name" value="Fumarase/aspartase (C-terminal domain)"/>
    <property type="match status" value="1"/>
</dbReference>
<dbReference type="Gene3D" id="1.20.200.10">
    <property type="entry name" value="Fumarase/aspartase (Central domain)"/>
    <property type="match status" value="1"/>
</dbReference>
<dbReference type="Gene3D" id="1.10.275.10">
    <property type="entry name" value="Fumarase/aspartase (N-terminal domain)"/>
    <property type="match status" value="1"/>
</dbReference>
<dbReference type="HAMAP" id="MF_00006">
    <property type="entry name" value="Arg_succ_lyase"/>
    <property type="match status" value="1"/>
</dbReference>
<dbReference type="InterPro" id="IPR029419">
    <property type="entry name" value="Arg_succ_lyase_C"/>
</dbReference>
<dbReference type="InterPro" id="IPR009049">
    <property type="entry name" value="Argininosuccinate_lyase"/>
</dbReference>
<dbReference type="InterPro" id="IPR024083">
    <property type="entry name" value="Fumarase/histidase_N"/>
</dbReference>
<dbReference type="InterPro" id="IPR020557">
    <property type="entry name" value="Fumarate_lyase_CS"/>
</dbReference>
<dbReference type="InterPro" id="IPR000362">
    <property type="entry name" value="Fumarate_lyase_fam"/>
</dbReference>
<dbReference type="InterPro" id="IPR022761">
    <property type="entry name" value="Fumarate_lyase_N"/>
</dbReference>
<dbReference type="InterPro" id="IPR008948">
    <property type="entry name" value="L-Aspartase-like"/>
</dbReference>
<dbReference type="NCBIfam" id="TIGR00838">
    <property type="entry name" value="argH"/>
    <property type="match status" value="1"/>
</dbReference>
<dbReference type="PANTHER" id="PTHR43814">
    <property type="entry name" value="ARGININOSUCCINATE LYASE"/>
    <property type="match status" value="1"/>
</dbReference>
<dbReference type="PANTHER" id="PTHR43814:SF1">
    <property type="entry name" value="ARGININOSUCCINATE LYASE"/>
    <property type="match status" value="1"/>
</dbReference>
<dbReference type="Pfam" id="PF14698">
    <property type="entry name" value="ASL_C2"/>
    <property type="match status" value="1"/>
</dbReference>
<dbReference type="Pfam" id="PF00206">
    <property type="entry name" value="Lyase_1"/>
    <property type="match status" value="1"/>
</dbReference>
<dbReference type="PRINTS" id="PR00145">
    <property type="entry name" value="ARGSUCLYASE"/>
</dbReference>
<dbReference type="PRINTS" id="PR00149">
    <property type="entry name" value="FUMRATELYASE"/>
</dbReference>
<dbReference type="SUPFAM" id="SSF48557">
    <property type="entry name" value="L-aspartase-like"/>
    <property type="match status" value="1"/>
</dbReference>
<dbReference type="PROSITE" id="PS00163">
    <property type="entry name" value="FUMARATE_LYASES"/>
    <property type="match status" value="1"/>
</dbReference>
<protein>
    <recommendedName>
        <fullName evidence="1">Argininosuccinate lyase</fullName>
        <shortName evidence="1">ASAL</shortName>
        <ecNumber evidence="1">4.3.2.1</ecNumber>
    </recommendedName>
    <alternativeName>
        <fullName evidence="1">Arginosuccinase</fullName>
    </alternativeName>
</protein>
<comment type="catalytic activity">
    <reaction evidence="1">
        <text>2-(N(omega)-L-arginino)succinate = fumarate + L-arginine</text>
        <dbReference type="Rhea" id="RHEA:24020"/>
        <dbReference type="ChEBI" id="CHEBI:29806"/>
        <dbReference type="ChEBI" id="CHEBI:32682"/>
        <dbReference type="ChEBI" id="CHEBI:57472"/>
        <dbReference type="EC" id="4.3.2.1"/>
    </reaction>
</comment>
<comment type="pathway">
    <text evidence="1">Amino-acid biosynthesis; L-arginine biosynthesis; L-arginine from L-ornithine and carbamoyl phosphate: step 3/3.</text>
</comment>
<comment type="subcellular location">
    <subcellularLocation>
        <location evidence="1">Cytoplasm</location>
    </subcellularLocation>
</comment>
<comment type="similarity">
    <text evidence="1">Belongs to the lyase 1 family. Argininosuccinate lyase subfamily.</text>
</comment>
<sequence length="481" mass="51195">MTQSTDPQGEKGLWGARFASGPATAMAALSKSTHFDFRLARYDLAGSRAHARVLHAAGLLDDDVLTALLAGLDALEADVVSGAFVPAEEDEDVHSALERALVERVGADVGGRLRAGRSRNDQIATLLRMFLRDHARVVAGLVLDVVEALLTQAAAHPGAAMPGRTHLQHAQPVLLGHHLMAHAWPLLRDVERLRDWDARAAVSPYGSGALAGSSLGLDPVAVARELGFTRSVENSIDGTASRDVAAEFAFVAAMIGVDLSRISEEVIAWATKEFSFVTLDDAWSTGSSIMPQKKNPDVAELARGKAGRLIGDLTGLLATLKGLPLAYNRDLQEDKEPVFDAVDTLEVLLPAVAGMVATLHFHTDRMASLAPQGFALATDIAEWLVRRGVPFRDAHRISGACVRRCEERAIAEGRGVELWDLTVEDLAAISPHLAPAVRDVLSTEGSLSSRDGIGGTAPVRVAEQLEAAQDALAAHLAWARP</sequence>
<accession>A6WCT0</accession>
<gene>
    <name evidence="1" type="primary">argH</name>
    <name type="ordered locus">Krad_3155</name>
</gene>
<keyword id="KW-0028">Amino-acid biosynthesis</keyword>
<keyword id="KW-0055">Arginine biosynthesis</keyword>
<keyword id="KW-0963">Cytoplasm</keyword>
<keyword id="KW-0456">Lyase</keyword>
<keyword id="KW-1185">Reference proteome</keyword>
<evidence type="ECO:0000255" key="1">
    <source>
        <dbReference type="HAMAP-Rule" id="MF_00006"/>
    </source>
</evidence>
<feature type="chain" id="PRO_0000335826" description="Argininosuccinate lyase">
    <location>
        <begin position="1"/>
        <end position="481"/>
    </location>
</feature>
<reference key="1">
    <citation type="journal article" date="2008" name="PLoS ONE">
        <title>Survival in nuclear waste, extreme resistance, and potential applications gleaned from the genome sequence of Kineococcus radiotolerans SRS30216.</title>
        <authorList>
            <person name="Bagwell C.E."/>
            <person name="Bhat S."/>
            <person name="Hawkins G.M."/>
            <person name="Smith B.W."/>
            <person name="Biswas T."/>
            <person name="Hoover T.R."/>
            <person name="Saunders E."/>
            <person name="Han C.S."/>
            <person name="Tsodikov O.V."/>
            <person name="Shimkets L.J."/>
        </authorList>
    </citation>
    <scope>NUCLEOTIDE SEQUENCE [LARGE SCALE GENOMIC DNA]</scope>
    <source>
        <strain>ATCC BAA-149 / DSM 14245 / SRS30216</strain>
    </source>
</reference>
<proteinExistence type="inferred from homology"/>